<gene>
    <name evidence="1" type="primary">znuC</name>
    <name type="ordered locus">Pden_4138</name>
</gene>
<dbReference type="EC" id="7.2.2.20" evidence="1"/>
<dbReference type="EMBL" id="CP000490">
    <property type="protein sequence ID" value="ABL72202.1"/>
    <property type="molecule type" value="Genomic_DNA"/>
</dbReference>
<dbReference type="RefSeq" id="WP_011750368.1">
    <property type="nucleotide sequence ID" value="NC_008687.1"/>
</dbReference>
<dbReference type="SMR" id="A1B9K8"/>
<dbReference type="STRING" id="318586.Pden_4138"/>
<dbReference type="EnsemblBacteria" id="ABL72202">
    <property type="protein sequence ID" value="ABL72202"/>
    <property type="gene ID" value="Pden_4138"/>
</dbReference>
<dbReference type="GeneID" id="93453804"/>
<dbReference type="KEGG" id="pde:Pden_4138"/>
<dbReference type="eggNOG" id="COG1121">
    <property type="taxonomic scope" value="Bacteria"/>
</dbReference>
<dbReference type="HOGENOM" id="CLU_000604_1_11_5"/>
<dbReference type="OrthoDB" id="9780942at2"/>
<dbReference type="Proteomes" id="UP000000361">
    <property type="component" value="Chromosome 2"/>
</dbReference>
<dbReference type="GO" id="GO:0005886">
    <property type="term" value="C:plasma membrane"/>
    <property type="evidence" value="ECO:0007669"/>
    <property type="project" value="UniProtKB-SubCell"/>
</dbReference>
<dbReference type="GO" id="GO:0015633">
    <property type="term" value="F:ABC-type zinc transporter activity"/>
    <property type="evidence" value="ECO:0007669"/>
    <property type="project" value="UniProtKB-EC"/>
</dbReference>
<dbReference type="GO" id="GO:0005524">
    <property type="term" value="F:ATP binding"/>
    <property type="evidence" value="ECO:0007669"/>
    <property type="project" value="UniProtKB-KW"/>
</dbReference>
<dbReference type="GO" id="GO:0016887">
    <property type="term" value="F:ATP hydrolysis activity"/>
    <property type="evidence" value="ECO:0007669"/>
    <property type="project" value="InterPro"/>
</dbReference>
<dbReference type="GO" id="GO:0010043">
    <property type="term" value="P:response to zinc ion"/>
    <property type="evidence" value="ECO:0007669"/>
    <property type="project" value="TreeGrafter"/>
</dbReference>
<dbReference type="Gene3D" id="3.40.50.300">
    <property type="entry name" value="P-loop containing nucleotide triphosphate hydrolases"/>
    <property type="match status" value="1"/>
</dbReference>
<dbReference type="InterPro" id="IPR003593">
    <property type="entry name" value="AAA+_ATPase"/>
</dbReference>
<dbReference type="InterPro" id="IPR003439">
    <property type="entry name" value="ABC_transporter-like_ATP-bd"/>
</dbReference>
<dbReference type="InterPro" id="IPR017871">
    <property type="entry name" value="ABC_transporter-like_CS"/>
</dbReference>
<dbReference type="InterPro" id="IPR050153">
    <property type="entry name" value="Metal_Ion_Import_ABC"/>
</dbReference>
<dbReference type="InterPro" id="IPR027417">
    <property type="entry name" value="P-loop_NTPase"/>
</dbReference>
<dbReference type="PANTHER" id="PTHR42734">
    <property type="entry name" value="METAL TRANSPORT SYSTEM ATP-BINDING PROTEIN TM_0124-RELATED"/>
    <property type="match status" value="1"/>
</dbReference>
<dbReference type="PANTHER" id="PTHR42734:SF9">
    <property type="entry name" value="ZINC IMPORT ATP-BINDING PROTEIN ZNUC"/>
    <property type="match status" value="1"/>
</dbReference>
<dbReference type="Pfam" id="PF00005">
    <property type="entry name" value="ABC_tran"/>
    <property type="match status" value="1"/>
</dbReference>
<dbReference type="SMART" id="SM00382">
    <property type="entry name" value="AAA"/>
    <property type="match status" value="1"/>
</dbReference>
<dbReference type="SUPFAM" id="SSF52540">
    <property type="entry name" value="P-loop containing nucleoside triphosphate hydrolases"/>
    <property type="match status" value="1"/>
</dbReference>
<dbReference type="PROSITE" id="PS00211">
    <property type="entry name" value="ABC_TRANSPORTER_1"/>
    <property type="match status" value="1"/>
</dbReference>
<dbReference type="PROSITE" id="PS50893">
    <property type="entry name" value="ABC_TRANSPORTER_2"/>
    <property type="match status" value="1"/>
</dbReference>
<dbReference type="PROSITE" id="PS51298">
    <property type="entry name" value="ZNUC"/>
    <property type="match status" value="1"/>
</dbReference>
<protein>
    <recommendedName>
        <fullName evidence="1">Zinc import ATP-binding protein ZnuC</fullName>
        <ecNumber evidence="1">7.2.2.20</ecNumber>
    </recommendedName>
</protein>
<evidence type="ECO:0000255" key="1">
    <source>
        <dbReference type="HAMAP-Rule" id="MF_01725"/>
    </source>
</evidence>
<evidence type="ECO:0000256" key="2">
    <source>
        <dbReference type="SAM" id="MobiDB-lite"/>
    </source>
</evidence>
<feature type="chain" id="PRO_0000281520" description="Zinc import ATP-binding protein ZnuC">
    <location>
        <begin position="1"/>
        <end position="254"/>
    </location>
</feature>
<feature type="domain" description="ABC transporter" evidence="1">
    <location>
        <begin position="5"/>
        <end position="221"/>
    </location>
</feature>
<feature type="region of interest" description="Disordered" evidence="2">
    <location>
        <begin position="234"/>
        <end position="254"/>
    </location>
</feature>
<feature type="compositionally biased region" description="Basic and acidic residues" evidence="2">
    <location>
        <begin position="234"/>
        <end position="245"/>
    </location>
</feature>
<feature type="binding site" evidence="1">
    <location>
        <begin position="38"/>
        <end position="45"/>
    </location>
    <ligand>
        <name>ATP</name>
        <dbReference type="ChEBI" id="CHEBI:30616"/>
    </ligand>
</feature>
<sequence length="254" mass="27209">MTPLICAADLSVSHGGDLPVLSHVDFLIRPGEIVTVVGPNGSGKSTLVRALLGHVSLSSGRVERVPGLRIGYVPQRVHIERAMPMTVRRFLSLPRRVGDAQAAAALERTGVPGLEGRQITALSGGQFQRVLLARALLGDPQLLVLDEPTQGLDQPGIVAFYKLIEEVRAETRAAVLMVSHDLLVVMRASDRVVCLNGHICCEGTPQAVSAAPAYRALFGSEAQGTLALYQHHHDHDHDHVAEGHRHGPACAHPH</sequence>
<proteinExistence type="inferred from homology"/>
<name>ZNUC_PARDP</name>
<accession>A1B9K8</accession>
<keyword id="KW-0067">ATP-binding</keyword>
<keyword id="KW-0997">Cell inner membrane</keyword>
<keyword id="KW-1003">Cell membrane</keyword>
<keyword id="KW-0406">Ion transport</keyword>
<keyword id="KW-0472">Membrane</keyword>
<keyword id="KW-0547">Nucleotide-binding</keyword>
<keyword id="KW-1185">Reference proteome</keyword>
<keyword id="KW-1278">Translocase</keyword>
<keyword id="KW-0813">Transport</keyword>
<keyword id="KW-0862">Zinc</keyword>
<keyword id="KW-0864">Zinc transport</keyword>
<reference key="1">
    <citation type="submission" date="2006-12" db="EMBL/GenBank/DDBJ databases">
        <title>Complete sequence of chromosome 2 of Paracoccus denitrificans PD1222.</title>
        <authorList>
            <person name="Copeland A."/>
            <person name="Lucas S."/>
            <person name="Lapidus A."/>
            <person name="Barry K."/>
            <person name="Detter J.C."/>
            <person name="Glavina del Rio T."/>
            <person name="Hammon N."/>
            <person name="Israni S."/>
            <person name="Dalin E."/>
            <person name="Tice H."/>
            <person name="Pitluck S."/>
            <person name="Munk A.C."/>
            <person name="Brettin T."/>
            <person name="Bruce D."/>
            <person name="Han C."/>
            <person name="Tapia R."/>
            <person name="Gilna P."/>
            <person name="Schmutz J."/>
            <person name="Larimer F."/>
            <person name="Land M."/>
            <person name="Hauser L."/>
            <person name="Kyrpides N."/>
            <person name="Lykidis A."/>
            <person name="Spiro S."/>
            <person name="Richardson D.J."/>
            <person name="Moir J.W.B."/>
            <person name="Ferguson S.J."/>
            <person name="van Spanning R.J.M."/>
            <person name="Richardson P."/>
        </authorList>
    </citation>
    <scope>NUCLEOTIDE SEQUENCE [LARGE SCALE GENOMIC DNA]</scope>
    <source>
        <strain>Pd 1222</strain>
    </source>
</reference>
<comment type="function">
    <text evidence="1">Part of the ABC transporter complex ZnuABC involved in zinc import. Responsible for energy coupling to the transport system.</text>
</comment>
<comment type="catalytic activity">
    <reaction evidence="1">
        <text>Zn(2+)(out) + ATP(in) + H2O(in) = Zn(2+)(in) + ADP(in) + phosphate(in) + H(+)(in)</text>
        <dbReference type="Rhea" id="RHEA:29795"/>
        <dbReference type="ChEBI" id="CHEBI:15377"/>
        <dbReference type="ChEBI" id="CHEBI:15378"/>
        <dbReference type="ChEBI" id="CHEBI:29105"/>
        <dbReference type="ChEBI" id="CHEBI:30616"/>
        <dbReference type="ChEBI" id="CHEBI:43474"/>
        <dbReference type="ChEBI" id="CHEBI:456216"/>
        <dbReference type="EC" id="7.2.2.20"/>
    </reaction>
</comment>
<comment type="subunit">
    <text evidence="1">The complex is composed of two ATP-binding proteins (ZnuC), two transmembrane proteins (ZnuB) and a solute-binding protein (ZnuA).</text>
</comment>
<comment type="subcellular location">
    <subcellularLocation>
        <location evidence="1">Cell inner membrane</location>
        <topology evidence="1">Peripheral membrane protein</topology>
    </subcellularLocation>
</comment>
<comment type="similarity">
    <text evidence="1">Belongs to the ABC transporter superfamily. Zinc importer (TC 3.A.1.15.5) family.</text>
</comment>
<organism>
    <name type="scientific">Paracoccus denitrificans (strain Pd 1222)</name>
    <dbReference type="NCBI Taxonomy" id="318586"/>
    <lineage>
        <taxon>Bacteria</taxon>
        <taxon>Pseudomonadati</taxon>
        <taxon>Pseudomonadota</taxon>
        <taxon>Alphaproteobacteria</taxon>
        <taxon>Rhodobacterales</taxon>
        <taxon>Paracoccaceae</taxon>
        <taxon>Paracoccus</taxon>
    </lineage>
</organism>